<gene>
    <name type="primary">RPL3</name>
    <name type="ORF">OK/SW-cl.32</name>
</gene>
<dbReference type="EMBL" id="X73460">
    <property type="protein sequence ID" value="CAA51839.1"/>
    <property type="molecule type" value="mRNA"/>
</dbReference>
<dbReference type="EMBL" id="AB062291">
    <property type="protein sequence ID" value="BAB93474.1"/>
    <property type="molecule type" value="mRNA"/>
</dbReference>
<dbReference type="EMBL" id="CR456566">
    <property type="protein sequence ID" value="CAG30452.1"/>
    <property type="molecule type" value="mRNA"/>
</dbReference>
<dbReference type="EMBL" id="AK315693">
    <property type="protein sequence ID" value="BAG38056.1"/>
    <property type="molecule type" value="mRNA"/>
</dbReference>
<dbReference type="EMBL" id="AL022326">
    <property type="status" value="NOT_ANNOTATED_CDS"/>
    <property type="molecule type" value="Genomic_DNA"/>
</dbReference>
<dbReference type="EMBL" id="BC002408">
    <property type="protein sequence ID" value="AAH02408.1"/>
    <property type="molecule type" value="mRNA"/>
</dbReference>
<dbReference type="EMBL" id="BC006483">
    <property type="protein sequence ID" value="AAH06483.1"/>
    <property type="molecule type" value="mRNA"/>
</dbReference>
<dbReference type="EMBL" id="BC008003">
    <property type="protein sequence ID" value="AAH08003.1"/>
    <property type="molecule type" value="mRNA"/>
</dbReference>
<dbReference type="EMBL" id="BC012146">
    <property type="protein sequence ID" value="AAH12146.1"/>
    <property type="molecule type" value="mRNA"/>
</dbReference>
<dbReference type="EMBL" id="BC012786">
    <property type="protein sequence ID" value="AAH12786.1"/>
    <property type="molecule type" value="mRNA"/>
</dbReference>
<dbReference type="EMBL" id="BC013674">
    <property type="protein sequence ID" value="AAH13674.1"/>
    <property type="molecule type" value="mRNA"/>
</dbReference>
<dbReference type="EMBL" id="BC014017">
    <property type="protein sequence ID" value="AAH14017.1"/>
    <property type="molecule type" value="mRNA"/>
</dbReference>
<dbReference type="EMBL" id="BC015032">
    <property type="protein sequence ID" value="AAH15032.1"/>
    <property type="molecule type" value="mRNA"/>
</dbReference>
<dbReference type="EMBL" id="BC015767">
    <property type="protein sequence ID" value="AAH15767.1"/>
    <property type="molecule type" value="mRNA"/>
</dbReference>
<dbReference type="EMBL" id="BC063662">
    <property type="protein sequence ID" value="AAH63662.1"/>
    <property type="molecule type" value="mRNA"/>
</dbReference>
<dbReference type="EMBL" id="BC088373">
    <property type="protein sequence ID" value="AAH88373.1"/>
    <property type="molecule type" value="mRNA"/>
</dbReference>
<dbReference type="EMBL" id="BC107711">
    <property type="protein sequence ID" value="AAI07712.1"/>
    <property type="molecule type" value="mRNA"/>
</dbReference>
<dbReference type="EMBL" id="M90054">
    <property type="protein sequence ID" value="AAA60291.1"/>
    <property type="molecule type" value="mRNA"/>
</dbReference>
<dbReference type="EMBL" id="L22453">
    <property type="protein sequence ID" value="AAA91344.1"/>
    <property type="molecule type" value="mRNA"/>
</dbReference>
<dbReference type="EMBL" id="AB007166">
    <property type="protein sequence ID" value="BAA25828.1"/>
    <property type="molecule type" value="Genomic_DNA"/>
</dbReference>
<dbReference type="CCDS" id="CCDS13988.1"/>
<dbReference type="PIR" id="S34195">
    <property type="entry name" value="S34195"/>
</dbReference>
<dbReference type="RefSeq" id="NP_000958.1">
    <property type="nucleotide sequence ID" value="NM_000967.4"/>
</dbReference>
<dbReference type="PDB" id="4UG0">
    <property type="method" value="EM"/>
    <property type="chains" value="LB=1-403"/>
</dbReference>
<dbReference type="PDB" id="4V6X">
    <property type="method" value="EM"/>
    <property type="resolution" value="5.00 A"/>
    <property type="chains" value="CB=1-403"/>
</dbReference>
<dbReference type="PDB" id="5AJ0">
    <property type="method" value="EM"/>
    <property type="resolution" value="3.50 A"/>
    <property type="chains" value="AB=1-403"/>
</dbReference>
<dbReference type="PDB" id="5LKS">
    <property type="method" value="EM"/>
    <property type="resolution" value="3.60 A"/>
    <property type="chains" value="LB=1-403"/>
</dbReference>
<dbReference type="PDB" id="5T2C">
    <property type="method" value="EM"/>
    <property type="resolution" value="3.60 A"/>
    <property type="chains" value="E=1-403"/>
</dbReference>
<dbReference type="PDB" id="6IP5">
    <property type="method" value="EM"/>
    <property type="resolution" value="3.90 A"/>
    <property type="chains" value="1E=1-403"/>
</dbReference>
<dbReference type="PDB" id="6IP6">
    <property type="method" value="EM"/>
    <property type="resolution" value="4.50 A"/>
    <property type="chains" value="1E=1-403"/>
</dbReference>
<dbReference type="PDB" id="6IP8">
    <property type="method" value="EM"/>
    <property type="resolution" value="3.90 A"/>
    <property type="chains" value="1E=1-403"/>
</dbReference>
<dbReference type="PDB" id="6LQM">
    <property type="method" value="EM"/>
    <property type="resolution" value="3.09 A"/>
    <property type="chains" value="B=1-403"/>
</dbReference>
<dbReference type="PDB" id="6LSR">
    <property type="method" value="EM"/>
    <property type="resolution" value="3.13 A"/>
    <property type="chains" value="B=1-403"/>
</dbReference>
<dbReference type="PDB" id="6LSS">
    <property type="method" value="EM"/>
    <property type="resolution" value="3.23 A"/>
    <property type="chains" value="B=1-403"/>
</dbReference>
<dbReference type="PDB" id="6LU8">
    <property type="method" value="EM"/>
    <property type="resolution" value="3.13 A"/>
    <property type="chains" value="B=1-403"/>
</dbReference>
<dbReference type="PDB" id="6OLE">
    <property type="method" value="EM"/>
    <property type="resolution" value="3.10 A"/>
    <property type="chains" value="B=2-398"/>
</dbReference>
<dbReference type="PDB" id="6OLF">
    <property type="method" value="EM"/>
    <property type="resolution" value="3.90 A"/>
    <property type="chains" value="B=2-398"/>
</dbReference>
<dbReference type="PDB" id="6OLG">
    <property type="method" value="EM"/>
    <property type="resolution" value="3.40 A"/>
    <property type="chains" value="AB=2-395"/>
</dbReference>
<dbReference type="PDB" id="6OLI">
    <property type="method" value="EM"/>
    <property type="resolution" value="3.50 A"/>
    <property type="chains" value="B=2-398"/>
</dbReference>
<dbReference type="PDB" id="6OLZ">
    <property type="method" value="EM"/>
    <property type="resolution" value="3.90 A"/>
    <property type="chains" value="AB=2-395"/>
</dbReference>
<dbReference type="PDB" id="6OM0">
    <property type="method" value="EM"/>
    <property type="resolution" value="3.10 A"/>
    <property type="chains" value="B=2-398"/>
</dbReference>
<dbReference type="PDB" id="6OM7">
    <property type="method" value="EM"/>
    <property type="resolution" value="3.70 A"/>
    <property type="chains" value="B=2-398"/>
</dbReference>
<dbReference type="PDB" id="6QZP">
    <property type="method" value="EM"/>
    <property type="resolution" value="2.90 A"/>
    <property type="chains" value="LB=2-403"/>
</dbReference>
<dbReference type="PDB" id="6W6L">
    <property type="method" value="EM"/>
    <property type="resolution" value="3.84 A"/>
    <property type="chains" value="B=1-403"/>
</dbReference>
<dbReference type="PDB" id="6XA1">
    <property type="method" value="EM"/>
    <property type="resolution" value="2.80 A"/>
    <property type="chains" value="LB=2-397"/>
</dbReference>
<dbReference type="PDB" id="6Y0G">
    <property type="method" value="EM"/>
    <property type="resolution" value="3.20 A"/>
    <property type="chains" value="LB=1-403"/>
</dbReference>
<dbReference type="PDB" id="6Y2L">
    <property type="method" value="EM"/>
    <property type="resolution" value="3.00 A"/>
    <property type="chains" value="LB=1-403"/>
</dbReference>
<dbReference type="PDB" id="6Y57">
    <property type="method" value="EM"/>
    <property type="resolution" value="3.50 A"/>
    <property type="chains" value="LB=1-403"/>
</dbReference>
<dbReference type="PDB" id="6Y6X">
    <property type="method" value="EM"/>
    <property type="resolution" value="2.80 A"/>
    <property type="chains" value="LB=2-398"/>
</dbReference>
<dbReference type="PDB" id="6Z6L">
    <property type="method" value="EM"/>
    <property type="resolution" value="3.00 A"/>
    <property type="chains" value="LB=1-403"/>
</dbReference>
<dbReference type="PDB" id="6Z6M">
    <property type="method" value="EM"/>
    <property type="resolution" value="3.10 A"/>
    <property type="chains" value="LB=1-403"/>
</dbReference>
<dbReference type="PDB" id="6Z6N">
    <property type="method" value="EM"/>
    <property type="resolution" value="2.90 A"/>
    <property type="chains" value="LB=1-403"/>
</dbReference>
<dbReference type="PDB" id="6ZM7">
    <property type="method" value="EM"/>
    <property type="resolution" value="2.70 A"/>
    <property type="chains" value="LB=1-403"/>
</dbReference>
<dbReference type="PDB" id="6ZME">
    <property type="method" value="EM"/>
    <property type="resolution" value="3.00 A"/>
    <property type="chains" value="LB=1-403"/>
</dbReference>
<dbReference type="PDB" id="6ZMI">
    <property type="method" value="EM"/>
    <property type="resolution" value="2.60 A"/>
    <property type="chains" value="LB=1-403"/>
</dbReference>
<dbReference type="PDB" id="6ZMO">
    <property type="method" value="EM"/>
    <property type="resolution" value="3.10 A"/>
    <property type="chains" value="LB=1-403"/>
</dbReference>
<dbReference type="PDB" id="7BHP">
    <property type="method" value="EM"/>
    <property type="resolution" value="3.30 A"/>
    <property type="chains" value="LB=1-403"/>
</dbReference>
<dbReference type="PDB" id="7F5S">
    <property type="method" value="EM"/>
    <property type="resolution" value="2.72 A"/>
    <property type="chains" value="LB=1-403"/>
</dbReference>
<dbReference type="PDB" id="7QVP">
    <property type="method" value="EM"/>
    <property type="resolution" value="3.00 A"/>
    <property type="chains" value="LB/MB=1-403"/>
</dbReference>
<dbReference type="PDB" id="7XNX">
    <property type="method" value="EM"/>
    <property type="resolution" value="2.70 A"/>
    <property type="chains" value="LB=1-403"/>
</dbReference>
<dbReference type="PDB" id="7XNY">
    <property type="method" value="EM"/>
    <property type="resolution" value="2.50 A"/>
    <property type="chains" value="LB=1-403"/>
</dbReference>
<dbReference type="PDB" id="8A3D">
    <property type="method" value="EM"/>
    <property type="resolution" value="1.67 A"/>
    <property type="chains" value="E=1-403"/>
</dbReference>
<dbReference type="PDB" id="8FKP">
    <property type="method" value="EM"/>
    <property type="resolution" value="2.85 A"/>
    <property type="chains" value="LN=1-403"/>
</dbReference>
<dbReference type="PDB" id="8FKQ">
    <property type="method" value="EM"/>
    <property type="resolution" value="2.76 A"/>
    <property type="chains" value="LN=1-403"/>
</dbReference>
<dbReference type="PDB" id="8FKR">
    <property type="method" value="EM"/>
    <property type="resolution" value="2.89 A"/>
    <property type="chains" value="LN=1-403"/>
</dbReference>
<dbReference type="PDB" id="8FKS">
    <property type="method" value="EM"/>
    <property type="resolution" value="2.88 A"/>
    <property type="chains" value="LN=1-403"/>
</dbReference>
<dbReference type="PDB" id="8FKT">
    <property type="method" value="EM"/>
    <property type="resolution" value="2.81 A"/>
    <property type="chains" value="LN=1-403"/>
</dbReference>
<dbReference type="PDB" id="8FKU">
    <property type="method" value="EM"/>
    <property type="resolution" value="2.82 A"/>
    <property type="chains" value="LN=1-403"/>
</dbReference>
<dbReference type="PDB" id="8FKV">
    <property type="method" value="EM"/>
    <property type="resolution" value="2.47 A"/>
    <property type="chains" value="LN=1-403"/>
</dbReference>
<dbReference type="PDB" id="8FKW">
    <property type="method" value="EM"/>
    <property type="resolution" value="2.50 A"/>
    <property type="chains" value="LN=1-403"/>
</dbReference>
<dbReference type="PDB" id="8FKX">
    <property type="method" value="EM"/>
    <property type="resolution" value="2.59 A"/>
    <property type="chains" value="LN=1-403"/>
</dbReference>
<dbReference type="PDB" id="8FKY">
    <property type="method" value="EM"/>
    <property type="resolution" value="2.67 A"/>
    <property type="chains" value="LN=1-403"/>
</dbReference>
<dbReference type="PDB" id="8FKZ">
    <property type="method" value="EM"/>
    <property type="resolution" value="3.04 A"/>
    <property type="chains" value="LN=1-403"/>
</dbReference>
<dbReference type="PDB" id="8FL0">
    <property type="method" value="EM"/>
    <property type="resolution" value="2.91 A"/>
    <property type="chains" value="LN=1-403"/>
</dbReference>
<dbReference type="PDB" id="8FL2">
    <property type="method" value="EM"/>
    <property type="resolution" value="2.67 A"/>
    <property type="chains" value="LN=1-403"/>
</dbReference>
<dbReference type="PDB" id="8FL3">
    <property type="method" value="EM"/>
    <property type="resolution" value="2.53 A"/>
    <property type="chains" value="LN=1-403"/>
</dbReference>
<dbReference type="PDB" id="8FL4">
    <property type="method" value="EM"/>
    <property type="resolution" value="2.89 A"/>
    <property type="chains" value="LN=1-403"/>
</dbReference>
<dbReference type="PDB" id="8FL6">
    <property type="method" value="EM"/>
    <property type="resolution" value="2.62 A"/>
    <property type="chains" value="LN=1-403"/>
</dbReference>
<dbReference type="PDB" id="8FL7">
    <property type="method" value="EM"/>
    <property type="resolution" value="2.55 A"/>
    <property type="chains" value="LN=1-403"/>
</dbReference>
<dbReference type="PDB" id="8FL9">
    <property type="method" value="EM"/>
    <property type="resolution" value="2.75 A"/>
    <property type="chains" value="LN=1-403"/>
</dbReference>
<dbReference type="PDB" id="8FLA">
    <property type="method" value="EM"/>
    <property type="resolution" value="2.63 A"/>
    <property type="chains" value="LN=1-403"/>
</dbReference>
<dbReference type="PDB" id="8FLB">
    <property type="method" value="EM"/>
    <property type="resolution" value="2.55 A"/>
    <property type="chains" value="LN=1-403"/>
</dbReference>
<dbReference type="PDB" id="8FLC">
    <property type="method" value="EM"/>
    <property type="resolution" value="2.76 A"/>
    <property type="chains" value="LN=1-403"/>
</dbReference>
<dbReference type="PDB" id="8FLD">
    <property type="method" value="EM"/>
    <property type="resolution" value="2.58 A"/>
    <property type="chains" value="LN=1-403"/>
</dbReference>
<dbReference type="PDB" id="8FLE">
    <property type="method" value="EM"/>
    <property type="resolution" value="2.48 A"/>
    <property type="chains" value="LN=1-403"/>
</dbReference>
<dbReference type="PDB" id="8FLF">
    <property type="method" value="EM"/>
    <property type="resolution" value="2.65 A"/>
    <property type="chains" value="LN=1-403"/>
</dbReference>
<dbReference type="PDB" id="8G5Y">
    <property type="method" value="EM"/>
    <property type="resolution" value="2.29 A"/>
    <property type="chains" value="LB=1-403"/>
</dbReference>
<dbReference type="PDB" id="8G5Z">
    <property type="method" value="EM"/>
    <property type="resolution" value="2.64 A"/>
    <property type="chains" value="LB=2-403"/>
</dbReference>
<dbReference type="PDB" id="8G60">
    <property type="method" value="EM"/>
    <property type="resolution" value="2.54 A"/>
    <property type="chains" value="LB=1-403"/>
</dbReference>
<dbReference type="PDB" id="8G61">
    <property type="method" value="EM"/>
    <property type="resolution" value="2.94 A"/>
    <property type="chains" value="LB=1-403"/>
</dbReference>
<dbReference type="PDB" id="8G6J">
    <property type="method" value="EM"/>
    <property type="resolution" value="2.80 A"/>
    <property type="chains" value="LB=1-403"/>
</dbReference>
<dbReference type="PDB" id="8GLP">
    <property type="method" value="EM"/>
    <property type="resolution" value="1.67 A"/>
    <property type="chains" value="LB=1-403"/>
</dbReference>
<dbReference type="PDB" id="8IDT">
    <property type="method" value="EM"/>
    <property type="resolution" value="2.80 A"/>
    <property type="chains" value="B=1-403"/>
</dbReference>
<dbReference type="PDB" id="8IDY">
    <property type="method" value="EM"/>
    <property type="resolution" value="3.00 A"/>
    <property type="chains" value="B=1-403"/>
</dbReference>
<dbReference type="PDB" id="8IE3">
    <property type="method" value="EM"/>
    <property type="resolution" value="3.30 A"/>
    <property type="chains" value="B=1-403"/>
</dbReference>
<dbReference type="PDB" id="8IFD">
    <property type="method" value="EM"/>
    <property type="resolution" value="2.59 A"/>
    <property type="chains" value="1E=1-403"/>
</dbReference>
<dbReference type="PDB" id="8IFE">
    <property type="method" value="EM"/>
    <property type="resolution" value="2.57 A"/>
    <property type="chains" value="1E=1-403"/>
</dbReference>
<dbReference type="PDB" id="8INE">
    <property type="method" value="EM"/>
    <property type="resolution" value="3.20 A"/>
    <property type="chains" value="B=1-403"/>
</dbReference>
<dbReference type="PDB" id="8INF">
    <property type="method" value="EM"/>
    <property type="resolution" value="3.00 A"/>
    <property type="chains" value="B=1-403"/>
</dbReference>
<dbReference type="PDB" id="8INK">
    <property type="method" value="EM"/>
    <property type="resolution" value="3.20 A"/>
    <property type="chains" value="B=1-403"/>
</dbReference>
<dbReference type="PDB" id="8IPD">
    <property type="method" value="EM"/>
    <property type="resolution" value="3.20 A"/>
    <property type="chains" value="B=1-403"/>
</dbReference>
<dbReference type="PDB" id="8IPX">
    <property type="method" value="EM"/>
    <property type="resolution" value="4.30 A"/>
    <property type="chains" value="B=1-403"/>
</dbReference>
<dbReference type="PDB" id="8IPY">
    <property type="method" value="EM"/>
    <property type="resolution" value="3.20 A"/>
    <property type="chains" value="B=1-403"/>
</dbReference>
<dbReference type="PDB" id="8IR1">
    <property type="method" value="EM"/>
    <property type="resolution" value="3.30 A"/>
    <property type="chains" value="B=1-403"/>
</dbReference>
<dbReference type="PDB" id="8IR3">
    <property type="method" value="EM"/>
    <property type="resolution" value="3.50 A"/>
    <property type="chains" value="B=1-403"/>
</dbReference>
<dbReference type="PDB" id="8JDJ">
    <property type="method" value="EM"/>
    <property type="resolution" value="2.50 A"/>
    <property type="chains" value="H=1-403"/>
</dbReference>
<dbReference type="PDB" id="8JDK">
    <property type="method" value="EM"/>
    <property type="resolution" value="2.26 A"/>
    <property type="chains" value="H=1-403"/>
</dbReference>
<dbReference type="PDB" id="8JDL">
    <property type="method" value="EM"/>
    <property type="resolution" value="2.42 A"/>
    <property type="chains" value="H=1-403"/>
</dbReference>
<dbReference type="PDB" id="8JDM">
    <property type="method" value="EM"/>
    <property type="resolution" value="2.67 A"/>
    <property type="chains" value="H=1-403"/>
</dbReference>
<dbReference type="PDB" id="8K2C">
    <property type="method" value="EM"/>
    <property type="resolution" value="2.40 A"/>
    <property type="chains" value="LB=1-403"/>
</dbReference>
<dbReference type="PDB" id="8OHD">
    <property type="method" value="EM"/>
    <property type="resolution" value="3.10 A"/>
    <property type="chains" value="LB=1-403"/>
</dbReference>
<dbReference type="PDB" id="8OJ0">
    <property type="method" value="EM"/>
    <property type="resolution" value="3.30 A"/>
    <property type="chains" value="LB=1-403"/>
</dbReference>
<dbReference type="PDB" id="8OJ5">
    <property type="method" value="EM"/>
    <property type="resolution" value="2.90 A"/>
    <property type="chains" value="LB=1-403"/>
</dbReference>
<dbReference type="PDB" id="8OJ8">
    <property type="method" value="EM"/>
    <property type="resolution" value="3.30 A"/>
    <property type="chains" value="LB=1-403"/>
</dbReference>
<dbReference type="PDB" id="8QFD">
    <property type="method" value="EM"/>
    <property type="resolution" value="2.20 A"/>
    <property type="chains" value="B=1-403"/>
</dbReference>
<dbReference type="PDB" id="8QOI">
    <property type="method" value="EM"/>
    <property type="resolution" value="1.90 A"/>
    <property type="chains" value="LB=2-403"/>
</dbReference>
<dbReference type="PDB" id="8QYX">
    <property type="method" value="EM"/>
    <property type="resolution" value="1.78 A"/>
    <property type="chains" value="E2=1-403"/>
</dbReference>
<dbReference type="PDB" id="8RL2">
    <property type="method" value="EM"/>
    <property type="resolution" value="2.84 A"/>
    <property type="chains" value="LB=1-403"/>
</dbReference>
<dbReference type="PDB" id="8UKB">
    <property type="method" value="EM"/>
    <property type="resolution" value="3.05 A"/>
    <property type="chains" value="LB=2-403"/>
</dbReference>
<dbReference type="PDB" id="8XSX">
    <property type="method" value="EM"/>
    <property type="resolution" value="2.40 A"/>
    <property type="chains" value="LB=1-403"/>
</dbReference>
<dbReference type="PDB" id="8XSY">
    <property type="method" value="EM"/>
    <property type="resolution" value="3.00 A"/>
    <property type="chains" value="LB=1-403"/>
</dbReference>
<dbReference type="PDB" id="8XSZ">
    <property type="method" value="EM"/>
    <property type="resolution" value="3.20 A"/>
    <property type="chains" value="LB=1-403"/>
</dbReference>
<dbReference type="PDB" id="8Y0W">
    <property type="method" value="EM"/>
    <property type="resolution" value="3.40 A"/>
    <property type="chains" value="LB=1-403"/>
</dbReference>
<dbReference type="PDB" id="8Y0X">
    <property type="method" value="EM"/>
    <property type="resolution" value="3.30 A"/>
    <property type="chains" value="LB=1-403"/>
</dbReference>
<dbReference type="PDB" id="8YOO">
    <property type="method" value="EM"/>
    <property type="resolution" value="2.00 A"/>
    <property type="chains" value="LB=1-403"/>
</dbReference>
<dbReference type="PDB" id="8YOP">
    <property type="method" value="EM"/>
    <property type="resolution" value="2.20 A"/>
    <property type="chains" value="LB=1-403"/>
</dbReference>
<dbReference type="PDB" id="9C3H">
    <property type="method" value="EM"/>
    <property type="resolution" value="2.00 A"/>
    <property type="chains" value="LB=1-403"/>
</dbReference>
<dbReference type="PDB" id="9G8M">
    <property type="method" value="EM"/>
    <property type="resolution" value="3.30 A"/>
    <property type="chains" value="LB=1-403"/>
</dbReference>
<dbReference type="PDB" id="9GMO">
    <property type="method" value="EM"/>
    <property type="resolution" value="2.59 A"/>
    <property type="chains" value="E=1-403"/>
</dbReference>
<dbReference type="PDBsum" id="4UG0"/>
<dbReference type="PDBsum" id="4V6X"/>
<dbReference type="PDBsum" id="5AJ0"/>
<dbReference type="PDBsum" id="5LKS"/>
<dbReference type="PDBsum" id="5T2C"/>
<dbReference type="PDBsum" id="6IP5"/>
<dbReference type="PDBsum" id="6IP6"/>
<dbReference type="PDBsum" id="6IP8"/>
<dbReference type="PDBsum" id="6LQM"/>
<dbReference type="PDBsum" id="6LSR"/>
<dbReference type="PDBsum" id="6LSS"/>
<dbReference type="PDBsum" id="6LU8"/>
<dbReference type="PDBsum" id="6OLE"/>
<dbReference type="PDBsum" id="6OLF"/>
<dbReference type="PDBsum" id="6OLG"/>
<dbReference type="PDBsum" id="6OLI"/>
<dbReference type="PDBsum" id="6OLZ"/>
<dbReference type="PDBsum" id="6OM0"/>
<dbReference type="PDBsum" id="6OM7"/>
<dbReference type="PDBsum" id="6QZP"/>
<dbReference type="PDBsum" id="6W6L"/>
<dbReference type="PDBsum" id="6XA1"/>
<dbReference type="PDBsum" id="6Y0G"/>
<dbReference type="PDBsum" id="6Y2L"/>
<dbReference type="PDBsum" id="6Y57"/>
<dbReference type="PDBsum" id="6Y6X"/>
<dbReference type="PDBsum" id="6Z6L"/>
<dbReference type="PDBsum" id="6Z6M"/>
<dbReference type="PDBsum" id="6Z6N"/>
<dbReference type="PDBsum" id="6ZM7"/>
<dbReference type="PDBsum" id="6ZME"/>
<dbReference type="PDBsum" id="6ZMI"/>
<dbReference type="PDBsum" id="6ZMO"/>
<dbReference type="PDBsum" id="7BHP"/>
<dbReference type="PDBsum" id="7F5S"/>
<dbReference type="PDBsum" id="7QVP"/>
<dbReference type="PDBsum" id="7XNX"/>
<dbReference type="PDBsum" id="7XNY"/>
<dbReference type="PDBsum" id="8A3D"/>
<dbReference type="PDBsum" id="8FKP"/>
<dbReference type="PDBsum" id="8FKQ"/>
<dbReference type="PDBsum" id="8FKR"/>
<dbReference type="PDBsum" id="8FKS"/>
<dbReference type="PDBsum" id="8FKT"/>
<dbReference type="PDBsum" id="8FKU"/>
<dbReference type="PDBsum" id="8FKV"/>
<dbReference type="PDBsum" id="8FKW"/>
<dbReference type="PDBsum" id="8FKX"/>
<dbReference type="PDBsum" id="8FKY"/>
<dbReference type="PDBsum" id="8FKZ"/>
<dbReference type="PDBsum" id="8FL0"/>
<dbReference type="PDBsum" id="8FL2"/>
<dbReference type="PDBsum" id="8FL3"/>
<dbReference type="PDBsum" id="8FL4"/>
<dbReference type="PDBsum" id="8FL6"/>
<dbReference type="PDBsum" id="8FL7"/>
<dbReference type="PDBsum" id="8FL9"/>
<dbReference type="PDBsum" id="8FLA"/>
<dbReference type="PDBsum" id="8FLB"/>
<dbReference type="PDBsum" id="8FLC"/>
<dbReference type="PDBsum" id="8FLD"/>
<dbReference type="PDBsum" id="8FLE"/>
<dbReference type="PDBsum" id="8FLF"/>
<dbReference type="PDBsum" id="8G5Y"/>
<dbReference type="PDBsum" id="8G5Z"/>
<dbReference type="PDBsum" id="8G60"/>
<dbReference type="PDBsum" id="8G61"/>
<dbReference type="PDBsum" id="8G6J"/>
<dbReference type="PDBsum" id="8GLP"/>
<dbReference type="PDBsum" id="8IDT"/>
<dbReference type="PDBsum" id="8IDY"/>
<dbReference type="PDBsum" id="8IE3"/>
<dbReference type="PDBsum" id="8IFD"/>
<dbReference type="PDBsum" id="8IFE"/>
<dbReference type="PDBsum" id="8INE"/>
<dbReference type="PDBsum" id="8INF"/>
<dbReference type="PDBsum" id="8INK"/>
<dbReference type="PDBsum" id="8IPD"/>
<dbReference type="PDBsum" id="8IPX"/>
<dbReference type="PDBsum" id="8IPY"/>
<dbReference type="PDBsum" id="8IR1"/>
<dbReference type="PDBsum" id="8IR3"/>
<dbReference type="PDBsum" id="8JDJ"/>
<dbReference type="PDBsum" id="8JDK"/>
<dbReference type="PDBsum" id="8JDL"/>
<dbReference type="PDBsum" id="8JDM"/>
<dbReference type="PDBsum" id="8K2C"/>
<dbReference type="PDBsum" id="8OHD"/>
<dbReference type="PDBsum" id="8OJ0"/>
<dbReference type="PDBsum" id="8OJ5"/>
<dbReference type="PDBsum" id="8OJ8"/>
<dbReference type="PDBsum" id="8QFD"/>
<dbReference type="PDBsum" id="8QOI"/>
<dbReference type="PDBsum" id="8QYX"/>
<dbReference type="PDBsum" id="8RL2"/>
<dbReference type="PDBsum" id="8UKB"/>
<dbReference type="PDBsum" id="8XSX"/>
<dbReference type="PDBsum" id="8XSY"/>
<dbReference type="PDBsum" id="8XSZ"/>
<dbReference type="PDBsum" id="8Y0W"/>
<dbReference type="PDBsum" id="8Y0X"/>
<dbReference type="PDBsum" id="8YOO"/>
<dbReference type="PDBsum" id="8YOP"/>
<dbReference type="PDBsum" id="9C3H"/>
<dbReference type="PDBsum" id="9G8M"/>
<dbReference type="PDBsum" id="9GMO"/>
<dbReference type="EMDB" id="EMD-0948"/>
<dbReference type="EMDB" id="EMD-0963"/>
<dbReference type="EMDB" id="EMD-0964"/>
<dbReference type="EMDB" id="EMD-0978"/>
<dbReference type="EMDB" id="EMD-10668"/>
<dbReference type="EMDB" id="EMD-10674"/>
<dbReference type="EMDB" id="EMD-10690"/>
<dbReference type="EMDB" id="EMD-10709"/>
<dbReference type="EMDB" id="EMD-11098"/>
<dbReference type="EMDB" id="EMD-11099"/>
<dbReference type="EMDB" id="EMD-11100"/>
<dbReference type="EMDB" id="EMD-11288"/>
<dbReference type="EMDB" id="EMD-11289"/>
<dbReference type="EMDB" id="EMD-11292"/>
<dbReference type="EMDB" id="EMD-11299"/>
<dbReference type="EMDB" id="EMD-12189"/>
<dbReference type="EMDB" id="EMD-14181"/>
<dbReference type="EMDB" id="EMD-15113"/>
<dbReference type="EMDB" id="EMD-16880"/>
<dbReference type="EMDB" id="EMD-16902"/>
<dbReference type="EMDB" id="EMD-16905"/>
<dbReference type="EMDB" id="EMD-16908"/>
<dbReference type="EMDB" id="EMD-18382"/>
<dbReference type="EMDB" id="EMD-18539"/>
<dbReference type="EMDB" id="EMD-18765"/>
<dbReference type="EMDB" id="EMD-19330"/>
<dbReference type="EMDB" id="EMD-29252"/>
<dbReference type="EMDB" id="EMD-29253"/>
<dbReference type="EMDB" id="EMD-29254"/>
<dbReference type="EMDB" id="EMD-29255"/>
<dbReference type="EMDB" id="EMD-29256"/>
<dbReference type="EMDB" id="EMD-29257"/>
<dbReference type="EMDB" id="EMD-29258"/>
<dbReference type="EMDB" id="EMD-29259"/>
<dbReference type="EMDB" id="EMD-29260"/>
<dbReference type="EMDB" id="EMD-29261"/>
<dbReference type="EMDB" id="EMD-29262"/>
<dbReference type="EMDB" id="EMD-29263"/>
<dbReference type="EMDB" id="EMD-29265"/>
<dbReference type="EMDB" id="EMD-29266"/>
<dbReference type="EMDB" id="EMD-29267"/>
<dbReference type="EMDB" id="EMD-29268"/>
<dbReference type="EMDB" id="EMD-29269"/>
<dbReference type="EMDB" id="EMD-29271"/>
<dbReference type="EMDB" id="EMD-29272"/>
<dbReference type="EMDB" id="EMD-29273"/>
<dbReference type="EMDB" id="EMD-29274"/>
<dbReference type="EMDB" id="EMD-29275"/>
<dbReference type="EMDB" id="EMD-29276"/>
<dbReference type="EMDB" id="EMD-29277"/>
<dbReference type="EMDB" id="EMD-29757"/>
<dbReference type="EMDB" id="EMD-29758"/>
<dbReference type="EMDB" id="EMD-29759"/>
<dbReference type="EMDB" id="EMD-29760"/>
<dbReference type="EMDB" id="EMD-29771"/>
<dbReference type="EMDB" id="EMD-31465"/>
<dbReference type="EMDB" id="EMD-33329"/>
<dbReference type="EMDB" id="EMD-33330"/>
<dbReference type="EMDB" id="EMD-35370"/>
<dbReference type="EMDB" id="EMD-35371"/>
<dbReference type="EMDB" id="EMD-35375"/>
<dbReference type="EMDB" id="EMD-35413"/>
<dbReference type="EMDB" id="EMD-35414"/>
<dbReference type="EMDB" id="EMD-35596"/>
<dbReference type="EMDB" id="EMD-35597"/>
<dbReference type="EMDB" id="EMD-35599"/>
<dbReference type="EMDB" id="EMD-35639"/>
<dbReference type="EMDB" id="EMD-35649"/>
<dbReference type="EMDB" id="EMD-35651"/>
<dbReference type="EMDB" id="EMD-35672"/>
<dbReference type="EMDB" id="EMD-35673"/>
<dbReference type="EMDB" id="EMD-36178"/>
<dbReference type="EMDB" id="EMD-36179"/>
<dbReference type="EMDB" id="EMD-36180"/>
<dbReference type="EMDB" id="EMD-36181"/>
<dbReference type="EMDB" id="EMD-36838"/>
<dbReference type="EMDB" id="EMD-38629"/>
<dbReference type="EMDB" id="EMD-38630"/>
<dbReference type="EMDB" id="EMD-38631"/>
<dbReference type="EMDB" id="EMD-3883"/>
<dbReference type="EMDB" id="EMD-39455"/>
<dbReference type="EMDB" id="EMD-39456"/>
<dbReference type="EMDB" id="EMD-40205"/>
<dbReference type="EMDB" id="EMD-4070"/>
<dbReference type="EMDB" id="EMD-42351"/>
<dbReference type="EMDB" id="EMD-45170"/>
<dbReference type="EMDB" id="EMD-51132"/>
<dbReference type="EMDB" id="EMD-51452"/>
<dbReference type="EMDB" id="EMD-9701"/>
<dbReference type="EMDB" id="EMD-9702"/>
<dbReference type="EMDB" id="EMD-9703"/>
<dbReference type="SMR" id="P39023"/>
<dbReference type="BioGRID" id="112042">
    <property type="interactions" value="759"/>
</dbReference>
<dbReference type="ComplexPortal" id="CPX-5183">
    <property type="entry name" value="60S cytosolic large ribosomal subunit"/>
</dbReference>
<dbReference type="ComplexPortal" id="CPX-7664">
    <property type="entry name" value="60S cytosolic large ribosomal subunit, testis-specific variant"/>
</dbReference>
<dbReference type="CORUM" id="P39023"/>
<dbReference type="FunCoup" id="P39023">
    <property type="interactions" value="2141"/>
</dbReference>
<dbReference type="IntAct" id="P39023">
    <property type="interactions" value="172"/>
</dbReference>
<dbReference type="MINT" id="P39023"/>
<dbReference type="STRING" id="9606.ENSP00000346001"/>
<dbReference type="DrugBank" id="DB02494">
    <property type="generic name" value="(S)-3-phenyllactic acid"/>
</dbReference>
<dbReference type="DrugBank" id="DB07374">
    <property type="generic name" value="Anisomycin"/>
</dbReference>
<dbReference type="DrugBank" id="DB04865">
    <property type="generic name" value="Omacetaxine mepesuccinate"/>
</dbReference>
<dbReference type="DrugBank" id="DB08437">
    <property type="generic name" value="Puromycin"/>
</dbReference>
<dbReference type="DrugBank" id="DB09092">
    <property type="generic name" value="Xanthinol"/>
</dbReference>
<dbReference type="GlyGen" id="P39023">
    <property type="glycosylation" value="2 sites, 1 N-linked glycan (1 site), 1 O-linked glycan (1 site)"/>
</dbReference>
<dbReference type="iPTMnet" id="P39023"/>
<dbReference type="MetOSite" id="P39023"/>
<dbReference type="PhosphoSitePlus" id="P39023"/>
<dbReference type="SwissPalm" id="P39023"/>
<dbReference type="BioMuta" id="RPL3"/>
<dbReference type="DMDM" id="730565"/>
<dbReference type="jPOST" id="P39023"/>
<dbReference type="MassIVE" id="P39023"/>
<dbReference type="PaxDb" id="9606-ENSP00000346001"/>
<dbReference type="PeptideAtlas" id="P39023"/>
<dbReference type="PRIDE" id="P39023"/>
<dbReference type="ProteomicsDB" id="55309"/>
<dbReference type="Pumba" id="P39023"/>
<dbReference type="TopDownProteomics" id="P39023"/>
<dbReference type="Antibodypedia" id="1245">
    <property type="antibodies" value="291 antibodies from 30 providers"/>
</dbReference>
<dbReference type="DNASU" id="6122"/>
<dbReference type="Ensembl" id="ENST00000216146.9">
    <property type="protein sequence ID" value="ENSP00000346001.3"/>
    <property type="gene ID" value="ENSG00000100316.16"/>
</dbReference>
<dbReference type="GeneID" id="6122"/>
<dbReference type="KEGG" id="hsa:6122"/>
<dbReference type="MANE-Select" id="ENST00000216146.9">
    <property type="protein sequence ID" value="ENSP00000346001.3"/>
    <property type="RefSeq nucleotide sequence ID" value="NM_000967.4"/>
    <property type="RefSeq protein sequence ID" value="NP_000958.1"/>
</dbReference>
<dbReference type="UCSC" id="uc003axi.4">
    <property type="organism name" value="human"/>
</dbReference>
<dbReference type="AGR" id="HGNC:10332"/>
<dbReference type="CTD" id="6122"/>
<dbReference type="DisGeNET" id="6122"/>
<dbReference type="GeneCards" id="RPL3"/>
<dbReference type="HGNC" id="HGNC:10332">
    <property type="gene designation" value="RPL3"/>
</dbReference>
<dbReference type="HPA" id="ENSG00000100316">
    <property type="expression patterns" value="Low tissue specificity"/>
</dbReference>
<dbReference type="MalaCards" id="RPL3"/>
<dbReference type="MIM" id="604163">
    <property type="type" value="gene"/>
</dbReference>
<dbReference type="neXtProt" id="NX_P39023"/>
<dbReference type="OpenTargets" id="ENSG00000100316"/>
<dbReference type="PharmGKB" id="PA34713"/>
<dbReference type="VEuPathDB" id="HostDB:ENSG00000100316"/>
<dbReference type="eggNOG" id="KOG0746">
    <property type="taxonomic scope" value="Eukaryota"/>
</dbReference>
<dbReference type="GeneTree" id="ENSGT00390000017606"/>
<dbReference type="HOGENOM" id="CLU_033361_2_1_1"/>
<dbReference type="InParanoid" id="P39023"/>
<dbReference type="OMA" id="QRTEYNK"/>
<dbReference type="OrthoDB" id="1611972at2759"/>
<dbReference type="PAN-GO" id="P39023">
    <property type="GO annotations" value="4 GO annotations based on evolutionary models"/>
</dbReference>
<dbReference type="PhylomeDB" id="P39023"/>
<dbReference type="TreeFam" id="TF300555"/>
<dbReference type="PathwayCommons" id="P39023"/>
<dbReference type="Reactome" id="R-HSA-156827">
    <property type="pathway name" value="L13a-mediated translational silencing of Ceruloplasmin expression"/>
</dbReference>
<dbReference type="Reactome" id="R-HSA-156902">
    <property type="pathway name" value="Peptide chain elongation"/>
</dbReference>
<dbReference type="Reactome" id="R-HSA-1799339">
    <property type="pathway name" value="SRP-dependent cotranslational protein targeting to membrane"/>
</dbReference>
<dbReference type="Reactome" id="R-HSA-192823">
    <property type="pathway name" value="Viral mRNA Translation"/>
</dbReference>
<dbReference type="Reactome" id="R-HSA-2408557">
    <property type="pathway name" value="Selenocysteine synthesis"/>
</dbReference>
<dbReference type="Reactome" id="R-HSA-6791226">
    <property type="pathway name" value="Major pathway of rRNA processing in the nucleolus and cytosol"/>
</dbReference>
<dbReference type="Reactome" id="R-HSA-72689">
    <property type="pathway name" value="Formation of a pool of free 40S subunits"/>
</dbReference>
<dbReference type="Reactome" id="R-HSA-72706">
    <property type="pathway name" value="GTP hydrolysis and joining of the 60S ribosomal subunit"/>
</dbReference>
<dbReference type="Reactome" id="R-HSA-72764">
    <property type="pathway name" value="Eukaryotic Translation Termination"/>
</dbReference>
<dbReference type="Reactome" id="R-HSA-9010553">
    <property type="pathway name" value="Regulation of expression of SLITs and ROBOs"/>
</dbReference>
<dbReference type="Reactome" id="R-HSA-9633012">
    <property type="pathway name" value="Response of EIF2AK4 (GCN2) to amino acid deficiency"/>
</dbReference>
<dbReference type="Reactome" id="R-HSA-975956">
    <property type="pathway name" value="Nonsense Mediated Decay (NMD) independent of the Exon Junction Complex (EJC)"/>
</dbReference>
<dbReference type="Reactome" id="R-HSA-975957">
    <property type="pathway name" value="Nonsense Mediated Decay (NMD) enhanced by the Exon Junction Complex (EJC)"/>
</dbReference>
<dbReference type="SignaLink" id="P39023"/>
<dbReference type="SIGNOR" id="P39023"/>
<dbReference type="BioGRID-ORCS" id="6122">
    <property type="hits" value="848 hits in 1142 CRISPR screens"/>
</dbReference>
<dbReference type="CD-CODE" id="232F8A39">
    <property type="entry name" value="P-body"/>
</dbReference>
<dbReference type="CD-CODE" id="91857CE7">
    <property type="entry name" value="Nucleolus"/>
</dbReference>
<dbReference type="CD-CODE" id="DEE660B4">
    <property type="entry name" value="Stress granule"/>
</dbReference>
<dbReference type="CD-CODE" id="FB4E32DD">
    <property type="entry name" value="Presynaptic clusters and postsynaptic densities"/>
</dbReference>
<dbReference type="ChiTaRS" id="RPL3">
    <property type="organism name" value="human"/>
</dbReference>
<dbReference type="GeneWiki" id="RPL3"/>
<dbReference type="GenomeRNAi" id="6122"/>
<dbReference type="Pharos" id="P39023">
    <property type="development level" value="Tbio"/>
</dbReference>
<dbReference type="PRO" id="PR:P39023"/>
<dbReference type="Proteomes" id="UP000005640">
    <property type="component" value="Chromosome 22"/>
</dbReference>
<dbReference type="RNAct" id="P39023">
    <property type="molecule type" value="protein"/>
</dbReference>
<dbReference type="Bgee" id="ENSG00000100316">
    <property type="expression patterns" value="Expressed in left ovary and 215 other cell types or tissues"/>
</dbReference>
<dbReference type="ExpressionAtlas" id="P39023">
    <property type="expression patterns" value="baseline and differential"/>
</dbReference>
<dbReference type="GO" id="GO:0005737">
    <property type="term" value="C:cytoplasm"/>
    <property type="evidence" value="ECO:0007005"/>
    <property type="project" value="UniProtKB"/>
</dbReference>
<dbReference type="GO" id="GO:0005829">
    <property type="term" value="C:cytosol"/>
    <property type="evidence" value="ECO:0000314"/>
    <property type="project" value="HPA"/>
</dbReference>
<dbReference type="GO" id="GO:0022625">
    <property type="term" value="C:cytosolic large ribosomal subunit"/>
    <property type="evidence" value="ECO:0000314"/>
    <property type="project" value="UniProtKB"/>
</dbReference>
<dbReference type="GO" id="GO:0022626">
    <property type="term" value="C:cytosolic ribosome"/>
    <property type="evidence" value="ECO:0000314"/>
    <property type="project" value="FlyBase"/>
</dbReference>
<dbReference type="GO" id="GO:0070062">
    <property type="term" value="C:extracellular exosome"/>
    <property type="evidence" value="ECO:0007005"/>
    <property type="project" value="UniProtKB"/>
</dbReference>
<dbReference type="GO" id="GO:0005925">
    <property type="term" value="C:focal adhesion"/>
    <property type="evidence" value="ECO:0007005"/>
    <property type="project" value="UniProtKB"/>
</dbReference>
<dbReference type="GO" id="GO:0005730">
    <property type="term" value="C:nucleolus"/>
    <property type="evidence" value="ECO:0000314"/>
    <property type="project" value="UniProtKB"/>
</dbReference>
<dbReference type="GO" id="GO:0005634">
    <property type="term" value="C:nucleus"/>
    <property type="evidence" value="ECO:0007005"/>
    <property type="project" value="UniProtKB"/>
</dbReference>
<dbReference type="GO" id="GO:0032991">
    <property type="term" value="C:protein-containing complex"/>
    <property type="evidence" value="ECO:0000314"/>
    <property type="project" value="UniProtKB"/>
</dbReference>
<dbReference type="GO" id="GO:0003723">
    <property type="term" value="F:RNA binding"/>
    <property type="evidence" value="ECO:0007005"/>
    <property type="project" value="UniProtKB"/>
</dbReference>
<dbReference type="GO" id="GO:0003735">
    <property type="term" value="F:structural constituent of ribosome"/>
    <property type="evidence" value="ECO:0000314"/>
    <property type="project" value="UniProtKB"/>
</dbReference>
<dbReference type="GO" id="GO:0071353">
    <property type="term" value="P:cellular response to interleukin-4"/>
    <property type="evidence" value="ECO:0007669"/>
    <property type="project" value="Ensembl"/>
</dbReference>
<dbReference type="GO" id="GO:0002181">
    <property type="term" value="P:cytoplasmic translation"/>
    <property type="evidence" value="ECO:0000305"/>
    <property type="project" value="FlyBase"/>
</dbReference>
<dbReference type="GO" id="GO:0006412">
    <property type="term" value="P:translation"/>
    <property type="evidence" value="ECO:0000318"/>
    <property type="project" value="GO_Central"/>
</dbReference>
<dbReference type="FunFam" id="2.40.30.10:FF:000079">
    <property type="entry name" value="60S ribosomal protein L3"/>
    <property type="match status" value="1"/>
</dbReference>
<dbReference type="FunFam" id="3.30.1430.10:FF:000001">
    <property type="entry name" value="60S ribosomal protein L3"/>
    <property type="match status" value="1"/>
</dbReference>
<dbReference type="FunFam" id="4.10.960.10:FF:000002">
    <property type="entry name" value="60S ribosomal protein L3"/>
    <property type="match status" value="1"/>
</dbReference>
<dbReference type="FunFam" id="4.10.960.10:FF:000004">
    <property type="entry name" value="60S ribosomal protein L3"/>
    <property type="match status" value="1"/>
</dbReference>
<dbReference type="FunFam" id="2.40.30.10:FF:000351">
    <property type="entry name" value="Ribosomal protein L3"/>
    <property type="match status" value="1"/>
</dbReference>
<dbReference type="Gene3D" id="3.30.1430.10">
    <property type="match status" value="1"/>
</dbReference>
<dbReference type="Gene3D" id="4.10.960.10">
    <property type="entry name" value="Ribosomal protein L3, domain 3"/>
    <property type="match status" value="1"/>
</dbReference>
<dbReference type="Gene3D" id="2.40.30.10">
    <property type="entry name" value="Translation factors"/>
    <property type="match status" value="1"/>
</dbReference>
<dbReference type="InterPro" id="IPR045077">
    <property type="entry name" value="L3_arc_euk"/>
</dbReference>
<dbReference type="InterPro" id="IPR044892">
    <property type="entry name" value="Ribosomal_L3_dom_3_arc_sf"/>
</dbReference>
<dbReference type="InterPro" id="IPR000597">
    <property type="entry name" value="Ribosomal_uL3"/>
</dbReference>
<dbReference type="InterPro" id="IPR019926">
    <property type="entry name" value="Ribosomal_uL3_CS"/>
</dbReference>
<dbReference type="InterPro" id="IPR009000">
    <property type="entry name" value="Transl_B-barrel_sf"/>
</dbReference>
<dbReference type="PANTHER" id="PTHR11363">
    <property type="entry name" value="60S RIBOSOMAL PROTEIN L3-RELATED"/>
    <property type="match status" value="1"/>
</dbReference>
<dbReference type="PANTHER" id="PTHR11363:SF4">
    <property type="entry name" value="LARGE RIBOSOMAL SUBUNIT PROTEIN UL3"/>
    <property type="match status" value="1"/>
</dbReference>
<dbReference type="Pfam" id="PF00297">
    <property type="entry name" value="Ribosomal_L3"/>
    <property type="match status" value="1"/>
</dbReference>
<dbReference type="SUPFAM" id="SSF50447">
    <property type="entry name" value="Translation proteins"/>
    <property type="match status" value="1"/>
</dbReference>
<dbReference type="PROSITE" id="PS00474">
    <property type="entry name" value="RIBOSOMAL_L3"/>
    <property type="match status" value="1"/>
</dbReference>
<proteinExistence type="evidence at protein level"/>
<keyword id="KW-0002">3D-structure</keyword>
<keyword id="KW-0007">Acetylation</keyword>
<keyword id="KW-0963">Cytoplasm</keyword>
<keyword id="KW-0903">Direct protein sequencing</keyword>
<keyword id="KW-1017">Isopeptide bond</keyword>
<keyword id="KW-0488">Methylation</keyword>
<keyword id="KW-0539">Nucleus</keyword>
<keyword id="KW-0597">Phosphoprotein</keyword>
<keyword id="KW-1267">Proteomics identification</keyword>
<keyword id="KW-1185">Reference proteome</keyword>
<keyword id="KW-0687">Ribonucleoprotein</keyword>
<keyword id="KW-0689">Ribosomal protein</keyword>
<keyword id="KW-0832">Ubl conjugation</keyword>
<organism>
    <name type="scientific">Homo sapiens</name>
    <name type="common">Human</name>
    <dbReference type="NCBI Taxonomy" id="9606"/>
    <lineage>
        <taxon>Eukaryota</taxon>
        <taxon>Metazoa</taxon>
        <taxon>Chordata</taxon>
        <taxon>Craniata</taxon>
        <taxon>Vertebrata</taxon>
        <taxon>Euteleostomi</taxon>
        <taxon>Mammalia</taxon>
        <taxon>Eutheria</taxon>
        <taxon>Euarchontoglires</taxon>
        <taxon>Primates</taxon>
        <taxon>Haplorrhini</taxon>
        <taxon>Catarrhini</taxon>
        <taxon>Hominidae</taxon>
        <taxon>Homo</taxon>
    </lineage>
</organism>
<evidence type="ECO:0000250" key="1">
    <source>
        <dbReference type="UniProtKB" id="P27659"/>
    </source>
</evidence>
<evidence type="ECO:0000256" key="2">
    <source>
        <dbReference type="SAM" id="MobiDB-lite"/>
    </source>
</evidence>
<evidence type="ECO:0000269" key="3">
    <source>
    </source>
</evidence>
<evidence type="ECO:0000269" key="4">
    <source>
    </source>
</evidence>
<evidence type="ECO:0000269" key="5">
    <source>
    </source>
</evidence>
<evidence type="ECO:0000269" key="6">
    <source>
    </source>
</evidence>
<evidence type="ECO:0000269" key="7">
    <source>
    </source>
</evidence>
<evidence type="ECO:0000269" key="8">
    <source>
    </source>
</evidence>
<evidence type="ECO:0000269" key="9">
    <source>
    </source>
</evidence>
<evidence type="ECO:0000269" key="10">
    <source>
    </source>
</evidence>
<evidence type="ECO:0000269" key="11">
    <source>
    </source>
</evidence>
<evidence type="ECO:0000303" key="12">
    <source>
    </source>
</evidence>
<evidence type="ECO:0000305" key="13"/>
<evidence type="ECO:0000305" key="14">
    <source>
    </source>
</evidence>
<evidence type="ECO:0007744" key="15">
    <source>
        <dbReference type="PDB" id="6LQM"/>
    </source>
</evidence>
<evidence type="ECO:0007744" key="16">
    <source>
        <dbReference type="PDB" id="6LSR"/>
    </source>
</evidence>
<evidence type="ECO:0007744" key="17">
    <source>
        <dbReference type="PDB" id="6LSS"/>
    </source>
</evidence>
<evidence type="ECO:0007744" key="18">
    <source>
        <dbReference type="PDB" id="6LU8"/>
    </source>
</evidence>
<evidence type="ECO:0007744" key="19">
    <source>
    </source>
</evidence>
<evidence type="ECO:0007744" key="20">
    <source>
    </source>
</evidence>
<evidence type="ECO:0007744" key="21">
    <source>
    </source>
</evidence>
<evidence type="ECO:0007744" key="22">
    <source>
    </source>
</evidence>
<evidence type="ECO:0007744" key="23">
    <source>
    </source>
</evidence>
<evidence type="ECO:0007744" key="24">
    <source>
    </source>
</evidence>
<evidence type="ECO:0007744" key="25">
    <source>
    </source>
</evidence>
<evidence type="ECO:0007744" key="26">
    <source>
    </source>
</evidence>
<reference key="1">
    <citation type="submission" date="1993-06" db="EMBL/GenBank/DDBJ databases">
        <title>Complete coding sequence of human ribosomal protein L3 mRNA.</title>
        <authorList>
            <person name="Leffers H."/>
        </authorList>
    </citation>
    <scope>NUCLEOTIDE SEQUENCE [MRNA]</scope>
</reference>
<reference key="2">
    <citation type="submission" date="2001-05" db="EMBL/GenBank/DDBJ databases">
        <title>Identification of immuno-peptidmics that are recognized by tumor-reactive CTL generated from TIL of colon cancer patients.</title>
        <authorList>
            <person name="Shichijo S."/>
            <person name="Itoh K."/>
        </authorList>
    </citation>
    <scope>NUCLEOTIDE SEQUENCE [LARGE SCALE MRNA]</scope>
    <source>
        <tissue>Colon adenocarcinoma</tissue>
    </source>
</reference>
<reference key="3">
    <citation type="journal article" date="2004" name="Genome Biol.">
        <title>A genome annotation-driven approach to cloning the human ORFeome.</title>
        <authorList>
            <person name="Collins J.E."/>
            <person name="Wright C.L."/>
            <person name="Edwards C.A."/>
            <person name="Davis M.P."/>
            <person name="Grinham J.A."/>
            <person name="Cole C.G."/>
            <person name="Goward M.E."/>
            <person name="Aguado B."/>
            <person name="Mallya M."/>
            <person name="Mokrab Y."/>
            <person name="Huckle E.J."/>
            <person name="Beare D.M."/>
            <person name="Dunham I."/>
        </authorList>
    </citation>
    <scope>NUCLEOTIDE SEQUENCE [LARGE SCALE MRNA]</scope>
</reference>
<reference key="4">
    <citation type="journal article" date="2004" name="Nat. Genet.">
        <title>Complete sequencing and characterization of 21,243 full-length human cDNAs.</title>
        <authorList>
            <person name="Ota T."/>
            <person name="Suzuki Y."/>
            <person name="Nishikawa T."/>
            <person name="Otsuki T."/>
            <person name="Sugiyama T."/>
            <person name="Irie R."/>
            <person name="Wakamatsu A."/>
            <person name="Hayashi K."/>
            <person name="Sato H."/>
            <person name="Nagai K."/>
            <person name="Kimura K."/>
            <person name="Makita H."/>
            <person name="Sekine M."/>
            <person name="Obayashi M."/>
            <person name="Nishi T."/>
            <person name="Shibahara T."/>
            <person name="Tanaka T."/>
            <person name="Ishii S."/>
            <person name="Yamamoto J."/>
            <person name="Saito K."/>
            <person name="Kawai Y."/>
            <person name="Isono Y."/>
            <person name="Nakamura Y."/>
            <person name="Nagahari K."/>
            <person name="Murakami K."/>
            <person name="Yasuda T."/>
            <person name="Iwayanagi T."/>
            <person name="Wagatsuma M."/>
            <person name="Shiratori A."/>
            <person name="Sudo H."/>
            <person name="Hosoiri T."/>
            <person name="Kaku Y."/>
            <person name="Kodaira H."/>
            <person name="Kondo H."/>
            <person name="Sugawara M."/>
            <person name="Takahashi M."/>
            <person name="Kanda K."/>
            <person name="Yokoi T."/>
            <person name="Furuya T."/>
            <person name="Kikkawa E."/>
            <person name="Omura Y."/>
            <person name="Abe K."/>
            <person name="Kamihara K."/>
            <person name="Katsuta N."/>
            <person name="Sato K."/>
            <person name="Tanikawa M."/>
            <person name="Yamazaki M."/>
            <person name="Ninomiya K."/>
            <person name="Ishibashi T."/>
            <person name="Yamashita H."/>
            <person name="Murakawa K."/>
            <person name="Fujimori K."/>
            <person name="Tanai H."/>
            <person name="Kimata M."/>
            <person name="Watanabe M."/>
            <person name="Hiraoka S."/>
            <person name="Chiba Y."/>
            <person name="Ishida S."/>
            <person name="Ono Y."/>
            <person name="Takiguchi S."/>
            <person name="Watanabe S."/>
            <person name="Yosida M."/>
            <person name="Hotuta T."/>
            <person name="Kusano J."/>
            <person name="Kanehori K."/>
            <person name="Takahashi-Fujii A."/>
            <person name="Hara H."/>
            <person name="Tanase T.-O."/>
            <person name="Nomura Y."/>
            <person name="Togiya S."/>
            <person name="Komai F."/>
            <person name="Hara R."/>
            <person name="Takeuchi K."/>
            <person name="Arita M."/>
            <person name="Imose N."/>
            <person name="Musashino K."/>
            <person name="Yuuki H."/>
            <person name="Oshima A."/>
            <person name="Sasaki N."/>
            <person name="Aotsuka S."/>
            <person name="Yoshikawa Y."/>
            <person name="Matsunawa H."/>
            <person name="Ichihara T."/>
            <person name="Shiohata N."/>
            <person name="Sano S."/>
            <person name="Moriya S."/>
            <person name="Momiyama H."/>
            <person name="Satoh N."/>
            <person name="Takami S."/>
            <person name="Terashima Y."/>
            <person name="Suzuki O."/>
            <person name="Nakagawa S."/>
            <person name="Senoh A."/>
            <person name="Mizoguchi H."/>
            <person name="Goto Y."/>
            <person name="Shimizu F."/>
            <person name="Wakebe H."/>
            <person name="Hishigaki H."/>
            <person name="Watanabe T."/>
            <person name="Sugiyama A."/>
            <person name="Takemoto M."/>
            <person name="Kawakami B."/>
            <person name="Yamazaki M."/>
            <person name="Watanabe K."/>
            <person name="Kumagai A."/>
            <person name="Itakura S."/>
            <person name="Fukuzumi Y."/>
            <person name="Fujimori Y."/>
            <person name="Komiyama M."/>
            <person name="Tashiro H."/>
            <person name="Tanigami A."/>
            <person name="Fujiwara T."/>
            <person name="Ono T."/>
            <person name="Yamada K."/>
            <person name="Fujii Y."/>
            <person name="Ozaki K."/>
            <person name="Hirao M."/>
            <person name="Ohmori Y."/>
            <person name="Kawabata A."/>
            <person name="Hikiji T."/>
            <person name="Kobatake N."/>
            <person name="Inagaki H."/>
            <person name="Ikema Y."/>
            <person name="Okamoto S."/>
            <person name="Okitani R."/>
            <person name="Kawakami T."/>
            <person name="Noguchi S."/>
            <person name="Itoh T."/>
            <person name="Shigeta K."/>
            <person name="Senba T."/>
            <person name="Matsumura K."/>
            <person name="Nakajima Y."/>
            <person name="Mizuno T."/>
            <person name="Morinaga M."/>
            <person name="Sasaki M."/>
            <person name="Togashi T."/>
            <person name="Oyama M."/>
            <person name="Hata H."/>
            <person name="Watanabe M."/>
            <person name="Komatsu T."/>
            <person name="Mizushima-Sugano J."/>
            <person name="Satoh T."/>
            <person name="Shirai Y."/>
            <person name="Takahashi Y."/>
            <person name="Nakagawa K."/>
            <person name="Okumura K."/>
            <person name="Nagase T."/>
            <person name="Nomura N."/>
            <person name="Kikuchi H."/>
            <person name="Masuho Y."/>
            <person name="Yamashita R."/>
            <person name="Nakai K."/>
            <person name="Yada T."/>
            <person name="Nakamura Y."/>
            <person name="Ohara O."/>
            <person name="Isogai T."/>
            <person name="Sugano S."/>
        </authorList>
    </citation>
    <scope>NUCLEOTIDE SEQUENCE [LARGE SCALE MRNA]</scope>
    <source>
        <tissue>Testis</tissue>
    </source>
</reference>
<reference key="5">
    <citation type="journal article" date="1999" name="Nature">
        <title>The DNA sequence of human chromosome 22.</title>
        <authorList>
            <person name="Dunham I."/>
            <person name="Hunt A.R."/>
            <person name="Collins J.E."/>
            <person name="Bruskiewich R."/>
            <person name="Beare D.M."/>
            <person name="Clamp M."/>
            <person name="Smink L.J."/>
            <person name="Ainscough R."/>
            <person name="Almeida J.P."/>
            <person name="Babbage A.K."/>
            <person name="Bagguley C."/>
            <person name="Bailey J."/>
            <person name="Barlow K.F."/>
            <person name="Bates K.N."/>
            <person name="Beasley O.P."/>
            <person name="Bird C.P."/>
            <person name="Blakey S.E."/>
            <person name="Bridgeman A.M."/>
            <person name="Buck D."/>
            <person name="Burgess J."/>
            <person name="Burrill W.D."/>
            <person name="Burton J."/>
            <person name="Carder C."/>
            <person name="Carter N.P."/>
            <person name="Chen Y."/>
            <person name="Clark G."/>
            <person name="Clegg S.M."/>
            <person name="Cobley V.E."/>
            <person name="Cole C.G."/>
            <person name="Collier R.E."/>
            <person name="Connor R."/>
            <person name="Conroy D."/>
            <person name="Corby N.R."/>
            <person name="Coville G.J."/>
            <person name="Cox A.V."/>
            <person name="Davis J."/>
            <person name="Dawson E."/>
            <person name="Dhami P.D."/>
            <person name="Dockree C."/>
            <person name="Dodsworth S.J."/>
            <person name="Durbin R.M."/>
            <person name="Ellington A.G."/>
            <person name="Evans K.L."/>
            <person name="Fey J.M."/>
            <person name="Fleming K."/>
            <person name="French L."/>
            <person name="Garner A.A."/>
            <person name="Gilbert J.G.R."/>
            <person name="Goward M.E."/>
            <person name="Grafham D.V."/>
            <person name="Griffiths M.N.D."/>
            <person name="Hall C."/>
            <person name="Hall R.E."/>
            <person name="Hall-Tamlyn G."/>
            <person name="Heathcott R.W."/>
            <person name="Ho S."/>
            <person name="Holmes S."/>
            <person name="Hunt S.E."/>
            <person name="Jones M.C."/>
            <person name="Kershaw J."/>
            <person name="Kimberley A.M."/>
            <person name="King A."/>
            <person name="Laird G.K."/>
            <person name="Langford C.F."/>
            <person name="Leversha M.A."/>
            <person name="Lloyd C."/>
            <person name="Lloyd D.M."/>
            <person name="Martyn I.D."/>
            <person name="Mashreghi-Mohammadi M."/>
            <person name="Matthews L.H."/>
            <person name="Mccann O.T."/>
            <person name="Mcclay J."/>
            <person name="Mclaren S."/>
            <person name="McMurray A.A."/>
            <person name="Milne S.A."/>
            <person name="Mortimore B.J."/>
            <person name="Odell C.N."/>
            <person name="Pavitt R."/>
            <person name="Pearce A.V."/>
            <person name="Pearson D."/>
            <person name="Phillimore B.J.C.T."/>
            <person name="Phillips S.H."/>
            <person name="Plumb R.W."/>
            <person name="Ramsay H."/>
            <person name="Ramsey Y."/>
            <person name="Rogers L."/>
            <person name="Ross M.T."/>
            <person name="Scott C.E."/>
            <person name="Sehra H.K."/>
            <person name="Skuce C.D."/>
            <person name="Smalley S."/>
            <person name="Smith M.L."/>
            <person name="Soderlund C."/>
            <person name="Spragon L."/>
            <person name="Steward C.A."/>
            <person name="Sulston J.E."/>
            <person name="Swann R.M."/>
            <person name="Vaudin M."/>
            <person name="Wall M."/>
            <person name="Wallis J.M."/>
            <person name="Whiteley M.N."/>
            <person name="Willey D.L."/>
            <person name="Williams L."/>
            <person name="Williams S.A."/>
            <person name="Williamson H."/>
            <person name="Wilmer T.E."/>
            <person name="Wilming L."/>
            <person name="Wright C.L."/>
            <person name="Hubbard T."/>
            <person name="Bentley D.R."/>
            <person name="Beck S."/>
            <person name="Rogers J."/>
            <person name="Shimizu N."/>
            <person name="Minoshima S."/>
            <person name="Kawasaki K."/>
            <person name="Sasaki T."/>
            <person name="Asakawa S."/>
            <person name="Kudoh J."/>
            <person name="Shintani A."/>
            <person name="Shibuya K."/>
            <person name="Yoshizaki Y."/>
            <person name="Aoki N."/>
            <person name="Mitsuyama S."/>
            <person name="Roe B.A."/>
            <person name="Chen F."/>
            <person name="Chu L."/>
            <person name="Crabtree J."/>
            <person name="Deschamps S."/>
            <person name="Do A."/>
            <person name="Do T."/>
            <person name="Dorman A."/>
            <person name="Fang F."/>
            <person name="Fu Y."/>
            <person name="Hu P."/>
            <person name="Hua A."/>
            <person name="Kenton S."/>
            <person name="Lai H."/>
            <person name="Lao H.I."/>
            <person name="Lewis J."/>
            <person name="Lewis S."/>
            <person name="Lin S.-P."/>
            <person name="Loh P."/>
            <person name="Malaj E."/>
            <person name="Nguyen T."/>
            <person name="Pan H."/>
            <person name="Phan S."/>
            <person name="Qi S."/>
            <person name="Qian Y."/>
            <person name="Ray L."/>
            <person name="Ren Q."/>
            <person name="Shaull S."/>
            <person name="Sloan D."/>
            <person name="Song L."/>
            <person name="Wang Q."/>
            <person name="Wang Y."/>
            <person name="Wang Z."/>
            <person name="White J."/>
            <person name="Willingham D."/>
            <person name="Wu H."/>
            <person name="Yao Z."/>
            <person name="Zhan M."/>
            <person name="Zhang G."/>
            <person name="Chissoe S."/>
            <person name="Murray J."/>
            <person name="Miller N."/>
            <person name="Minx P."/>
            <person name="Fulton R."/>
            <person name="Johnson D."/>
            <person name="Bemis G."/>
            <person name="Bentley D."/>
            <person name="Bradshaw H."/>
            <person name="Bourne S."/>
            <person name="Cordes M."/>
            <person name="Du Z."/>
            <person name="Fulton L."/>
            <person name="Goela D."/>
            <person name="Graves T."/>
            <person name="Hawkins J."/>
            <person name="Hinds K."/>
            <person name="Kemp K."/>
            <person name="Latreille P."/>
            <person name="Layman D."/>
            <person name="Ozersky P."/>
            <person name="Rohlfing T."/>
            <person name="Scheet P."/>
            <person name="Walker C."/>
            <person name="Wamsley A."/>
            <person name="Wohldmann P."/>
            <person name="Pepin K."/>
            <person name="Nelson J."/>
            <person name="Korf I."/>
            <person name="Bedell J.A."/>
            <person name="Hillier L.W."/>
            <person name="Mardis E."/>
            <person name="Waterston R."/>
            <person name="Wilson R."/>
            <person name="Emanuel B.S."/>
            <person name="Shaikh T."/>
            <person name="Kurahashi H."/>
            <person name="Saitta S."/>
            <person name="Budarf M.L."/>
            <person name="McDermid H.E."/>
            <person name="Johnson A."/>
            <person name="Wong A.C.C."/>
            <person name="Morrow B.E."/>
            <person name="Edelmann L."/>
            <person name="Kim U.J."/>
            <person name="Shizuya H."/>
            <person name="Simon M.I."/>
            <person name="Dumanski J.P."/>
            <person name="Peyrard M."/>
            <person name="Kedra D."/>
            <person name="Seroussi E."/>
            <person name="Fransson I."/>
            <person name="Tapia I."/>
            <person name="Bruder C.E."/>
            <person name="O'Brien K.P."/>
            <person name="Wilkinson P."/>
            <person name="Bodenteich A."/>
            <person name="Hartman K."/>
            <person name="Hu X."/>
            <person name="Khan A.S."/>
            <person name="Lane L."/>
            <person name="Tilahun Y."/>
            <person name="Wright H."/>
        </authorList>
    </citation>
    <scope>NUCLEOTIDE SEQUENCE [LARGE SCALE GENOMIC DNA]</scope>
</reference>
<reference key="6">
    <citation type="journal article" date="2004" name="Genome Res.">
        <title>The status, quality, and expansion of the NIH full-length cDNA project: the Mammalian Gene Collection (MGC).</title>
        <authorList>
            <consortium name="The MGC Project Team"/>
        </authorList>
    </citation>
    <scope>NUCLEOTIDE SEQUENCE [LARGE SCALE MRNA]</scope>
    <source>
        <tissue>Brain</tissue>
        <tissue>Colon</tissue>
        <tissue>Lung</tissue>
        <tissue>Muscle</tissue>
        <tissue>Ovary</tissue>
        <tissue>PNS</tissue>
        <tissue>Skin</tissue>
        <tissue>Uterus</tissue>
    </source>
</reference>
<reference key="7">
    <citation type="submission" date="1992-03" db="EMBL/GenBank/DDBJ databases">
        <authorList>
            <person name="Still I.H."/>
        </authorList>
    </citation>
    <scope>NUCLEOTIDE SEQUENCE [MRNA] OF 6-403</scope>
</reference>
<reference key="8">
    <citation type="journal article" date="1995" name="AIDS Res. Hum. Retroviruses">
        <title>Molecular cloning and characterization of a TAR-binding nuclear factor from T cells.</title>
        <authorList>
            <person name="Reddy T.R."/>
            <person name="Suhasini M."/>
            <person name="Rappaport J."/>
            <person name="Looney D.J."/>
            <person name="Kraus G."/>
            <person name="Wong-Staal F."/>
        </authorList>
    </citation>
    <scope>NUCLEOTIDE SEQUENCE [MRNA] OF 1-277</scope>
</reference>
<reference key="9">
    <citation type="journal article" date="1998" name="Genome Res.">
        <title>A map of 75 human ribosomal protein genes.</title>
        <authorList>
            <person name="Kenmochi N."/>
            <person name="Kawaguchi T."/>
            <person name="Rozen S."/>
            <person name="Davis E."/>
            <person name="Goodman N."/>
            <person name="Hudson T.J."/>
            <person name="Tanaka T."/>
            <person name="Page D.C."/>
        </authorList>
    </citation>
    <scope>NUCLEOTIDE SEQUENCE [GENOMIC DNA] OF 328-398</scope>
</reference>
<reference key="10">
    <citation type="journal article" date="2003" name="J. Protein Chem.">
        <title>Characterization and analysis of posttranslational modifications of the human large cytoplasmic ribosomal subunit proteins by mass spectrometry and Edman sequencing.</title>
        <authorList>
            <person name="Odintsova T.I."/>
            <person name="Muller E.C."/>
            <person name="Ivanov A.V."/>
            <person name="Egorov T.A."/>
            <person name="Bienert R."/>
            <person name="Vladimirov S.N."/>
            <person name="Kostka S."/>
            <person name="Otto A."/>
            <person name="Wittmann-Liebold B."/>
            <person name="Karpova G.G."/>
        </authorList>
    </citation>
    <scope>PROTEIN SEQUENCE OF 2-13</scope>
    <scope>IDENTIFICATION BY MASS SPECTROMETRY</scope>
    <scope>FUNCTION</scope>
    <scope>SUBUNIT</scope>
</reference>
<reference key="11">
    <citation type="journal article" date="2003" name="Nature">
        <title>Proteomic characterization of the human centrosome by protein correlation profiling.</title>
        <authorList>
            <person name="Andersen J.S."/>
            <person name="Wilkinson C.J."/>
            <person name="Mayor T."/>
            <person name="Mortensen P."/>
            <person name="Nigg E.A."/>
            <person name="Mann M."/>
        </authorList>
    </citation>
    <scope>IDENTIFICATION BY MASS SPECTROMETRY</scope>
    <source>
        <tissue>Lymphoblast</tissue>
    </source>
</reference>
<reference key="12">
    <citation type="journal article" date="2006" name="Nucleic Acids Res.">
        <title>NOP132 is required for proper nucleolus localization of DEAD-box RNA helicase DDX47.</title>
        <authorList>
            <person name="Sekiguchi T."/>
            <person name="Hayano T."/>
            <person name="Yanagida M."/>
            <person name="Takahashi N."/>
            <person name="Nishimoto T."/>
        </authorList>
    </citation>
    <scope>SUBCELLULAR LOCATION</scope>
</reference>
<reference key="13">
    <citation type="journal article" date="2008" name="Proc. Natl. Acad. Sci. U.S.A.">
        <title>A quantitative atlas of mitotic phosphorylation.</title>
        <authorList>
            <person name="Dephoure N."/>
            <person name="Zhou C."/>
            <person name="Villen J."/>
            <person name="Beausoleil S.A."/>
            <person name="Bakalarski C.E."/>
            <person name="Elledge S.J."/>
            <person name="Gygi S.P."/>
        </authorList>
    </citation>
    <scope>IDENTIFICATION BY MASS SPECTROMETRY [LARGE SCALE ANALYSIS]</scope>
    <source>
        <tissue>Cervix carcinoma</tissue>
    </source>
</reference>
<reference key="14">
    <citation type="journal article" date="2009" name="Mol. Cell. Proteomics">
        <title>Large-scale proteomics analysis of the human kinome.</title>
        <authorList>
            <person name="Oppermann F.S."/>
            <person name="Gnad F."/>
            <person name="Olsen J.V."/>
            <person name="Hornberger R."/>
            <person name="Greff Z."/>
            <person name="Keri G."/>
            <person name="Mann M."/>
            <person name="Daub H."/>
        </authorList>
    </citation>
    <scope>PHOSPHORYLATION [LARGE SCALE ANALYSIS] AT SER-13</scope>
    <scope>IDENTIFICATION BY MASS SPECTROMETRY [LARGE SCALE ANALYSIS]</scope>
</reference>
<reference key="15">
    <citation type="journal article" date="2009" name="Science">
        <title>Lysine acetylation targets protein complexes and co-regulates major cellular functions.</title>
        <authorList>
            <person name="Choudhary C."/>
            <person name="Kumar C."/>
            <person name="Gnad F."/>
            <person name="Nielsen M.L."/>
            <person name="Rehman M."/>
            <person name="Walther T.C."/>
            <person name="Olsen J.V."/>
            <person name="Mann M."/>
        </authorList>
    </citation>
    <scope>ACETYLATION [LARGE SCALE ANALYSIS] AT LYS-294 AND LYS-366</scope>
    <scope>IDENTIFICATION BY MASS SPECTROMETRY [LARGE SCALE ANALYSIS]</scope>
</reference>
<reference key="16">
    <citation type="journal article" date="2010" name="Sci. Signal.">
        <title>Quantitative phosphoproteomics reveals widespread full phosphorylation site occupancy during mitosis.</title>
        <authorList>
            <person name="Olsen J.V."/>
            <person name="Vermeulen M."/>
            <person name="Santamaria A."/>
            <person name="Kumar C."/>
            <person name="Miller M.L."/>
            <person name="Jensen L.J."/>
            <person name="Gnad F."/>
            <person name="Cox J."/>
            <person name="Jensen T.S."/>
            <person name="Nigg E.A."/>
            <person name="Brunak S."/>
            <person name="Mann M."/>
        </authorList>
    </citation>
    <scope>PHOSPHORYLATION [LARGE SCALE ANALYSIS] AT SER-13</scope>
    <scope>IDENTIFICATION BY MASS SPECTROMETRY [LARGE SCALE ANALYSIS]</scope>
    <source>
        <tissue>Cervix carcinoma</tissue>
    </source>
</reference>
<reference key="17">
    <citation type="journal article" date="2011" name="BMC Syst. Biol.">
        <title>Initial characterization of the human central proteome.</title>
        <authorList>
            <person name="Burkard T.R."/>
            <person name="Planyavsky M."/>
            <person name="Kaupe I."/>
            <person name="Breitwieser F.P."/>
            <person name="Buerckstuemmer T."/>
            <person name="Bennett K.L."/>
            <person name="Superti-Furga G."/>
            <person name="Colinge J."/>
        </authorList>
    </citation>
    <scope>IDENTIFICATION BY MASS SPECTROMETRY [LARGE SCALE ANALYSIS]</scope>
</reference>
<reference key="18">
    <citation type="journal article" date="2011" name="Sci. Signal.">
        <title>System-wide temporal characterization of the proteome and phosphoproteome of human embryonic stem cell differentiation.</title>
        <authorList>
            <person name="Rigbolt K.T."/>
            <person name="Prokhorova T.A."/>
            <person name="Akimov V."/>
            <person name="Henningsen J."/>
            <person name="Johansen P.T."/>
            <person name="Kratchmarova I."/>
            <person name="Kassem M."/>
            <person name="Mann M."/>
            <person name="Olsen J.V."/>
            <person name="Blagoev B."/>
        </authorList>
    </citation>
    <scope>PHOSPHORYLATION [LARGE SCALE ANALYSIS] AT SER-304</scope>
    <scope>IDENTIFICATION BY MASS SPECTROMETRY [LARGE SCALE ANALYSIS]</scope>
</reference>
<reference key="19">
    <citation type="journal article" date="2013" name="J. Proteome Res.">
        <title>Toward a comprehensive characterization of a human cancer cell phosphoproteome.</title>
        <authorList>
            <person name="Zhou H."/>
            <person name="Di Palma S."/>
            <person name="Preisinger C."/>
            <person name="Peng M."/>
            <person name="Polat A.N."/>
            <person name="Heck A.J."/>
            <person name="Mohammed S."/>
        </authorList>
    </citation>
    <scope>PHOSPHORYLATION [LARGE SCALE ANALYSIS] AT SER-13</scope>
    <scope>IDENTIFICATION BY MASS SPECTROMETRY [LARGE SCALE ANALYSIS]</scope>
    <source>
        <tissue>Erythroleukemia</tissue>
    </source>
</reference>
<reference key="20">
    <citation type="journal article" date="2013" name="PLoS Genet.">
        <title>A newly uncovered group of distantly related lysine methyltransferases preferentially interact with molecular chaperones to regulate their activity.</title>
        <authorList>
            <person name="Cloutier P."/>
            <person name="Lavallee-Adam M."/>
            <person name="Faubert D."/>
            <person name="Blanchette M."/>
            <person name="Coulombe B."/>
        </authorList>
    </citation>
    <scope>METHYLATION BY METTL18</scope>
</reference>
<reference key="21">
    <citation type="journal article" date="2014" name="Curr. Opin. Struct. Biol.">
        <title>A new system for naming ribosomal proteins.</title>
        <authorList>
            <person name="Ban N."/>
            <person name="Beckmann R."/>
            <person name="Cate J.H.D."/>
            <person name="Dinman J.D."/>
            <person name="Dragon F."/>
            <person name="Ellis S.R."/>
            <person name="Lafontaine D.L.J."/>
            <person name="Lindahl L."/>
            <person name="Liljas A."/>
            <person name="Lipton J.M."/>
            <person name="McAlear M.A."/>
            <person name="Moore P.B."/>
            <person name="Noller H.F."/>
            <person name="Ortega J."/>
            <person name="Panse V.G."/>
            <person name="Ramakrishnan V."/>
            <person name="Spahn C.M.T."/>
            <person name="Steitz T.A."/>
            <person name="Tchorzewski M."/>
            <person name="Tollervey D."/>
            <person name="Warren A.J."/>
            <person name="Williamson J.R."/>
            <person name="Wilson D."/>
            <person name="Yonath A."/>
            <person name="Yusupov M."/>
        </authorList>
    </citation>
    <scope>NOMENCLATURE</scope>
</reference>
<reference key="22">
    <citation type="journal article" date="2014" name="J. Proteomics">
        <title>An enzyme assisted RP-RPLC approach for in-depth analysis of human liver phosphoproteome.</title>
        <authorList>
            <person name="Bian Y."/>
            <person name="Song C."/>
            <person name="Cheng K."/>
            <person name="Dong M."/>
            <person name="Wang F."/>
            <person name="Huang J."/>
            <person name="Sun D."/>
            <person name="Wang L."/>
            <person name="Ye M."/>
            <person name="Zou H."/>
        </authorList>
    </citation>
    <scope>IDENTIFICATION BY MASS SPECTROMETRY [LARGE SCALE ANALYSIS]</scope>
    <source>
        <tissue>Liver</tissue>
    </source>
</reference>
<reference key="23">
    <citation type="journal article" date="2014" name="Proc. Natl. Acad. Sci. U.S.A.">
        <title>Mapping of SUMO sites and analysis of SUMOylation changes induced by external stimuli.</title>
        <authorList>
            <person name="Impens F."/>
            <person name="Radoshevich L."/>
            <person name="Cossart P."/>
            <person name="Ribet D."/>
        </authorList>
    </citation>
    <scope>SUMOYLATION [LARGE SCALE ANALYSIS] AT LYS-294</scope>
    <scope>IDENTIFICATION BY MASS SPECTROMETRY [LARGE SCALE ANALYSIS]</scope>
</reference>
<reference key="24">
    <citation type="journal article" date="2015" name="Cell Rep.">
        <title>SUMO-2 orchestrates chromatin modifiers in response to DNA damage.</title>
        <authorList>
            <person name="Hendriks I.A."/>
            <person name="Treffers L.W."/>
            <person name="Verlaan-de Vries M."/>
            <person name="Olsen J.V."/>
            <person name="Vertegaal A.C."/>
        </authorList>
    </citation>
    <scope>SUMOYLATION [LARGE SCALE ANALYSIS] AT LYS-399</scope>
    <scope>IDENTIFICATION BY MASS SPECTROMETRY [LARGE SCALE ANALYSIS]</scope>
</reference>
<reference key="25">
    <citation type="journal article" date="2015" name="Mol. Cell. Biol.">
        <title>The DHX33 RNA Helicase Promotes mRNA Translation Initiation.</title>
        <authorList>
            <person name="Zhang Y."/>
            <person name="You J."/>
            <person name="Wang X."/>
            <person name="Weber J."/>
        </authorList>
    </citation>
    <scope>INTERACTION WITH DHX33</scope>
</reference>
<reference key="26">
    <citation type="journal article" date="2015" name="Proteomics">
        <title>N-terminome analysis of the human mitochondrial proteome.</title>
        <authorList>
            <person name="Vaca Jacome A.S."/>
            <person name="Rabilloud T."/>
            <person name="Schaeffer-Reiss C."/>
            <person name="Rompais M."/>
            <person name="Ayoub D."/>
            <person name="Lane L."/>
            <person name="Bairoch A."/>
            <person name="Van Dorsselaer A."/>
            <person name="Carapito C."/>
        </authorList>
    </citation>
    <scope>IDENTIFICATION BY MASS SPECTROMETRY [LARGE SCALE ANALYSIS]</scope>
</reference>
<reference key="27">
    <citation type="journal article" date="2017" name="Nat. Struct. Mol. Biol.">
        <title>Site-specific mapping of the human SUMO proteome reveals co-modification with phosphorylation.</title>
        <authorList>
            <person name="Hendriks I.A."/>
            <person name="Lyon D."/>
            <person name="Young C."/>
            <person name="Jensen L.J."/>
            <person name="Vertegaal A.C."/>
            <person name="Nielsen M.L."/>
        </authorList>
    </citation>
    <scope>SUMOYLATION [LARGE SCALE ANALYSIS] AT LYS-39; LYS-224; LYS-226; LYS-286; LYS-366; LYS-386; LYS-393 AND LYS-399</scope>
    <scope>IDENTIFICATION BY MASS SPECTROMETRY [LARGE SCALE ANALYSIS]</scope>
</reference>
<reference key="28">
    <citation type="journal article" date="2021" name="Nucleic Acids Res.">
        <title>Human METTL18 is a histidine-specific methyltransferase that targets RPL3 and affects ribosome biogenesis and function.</title>
        <authorList>
            <person name="Malecki J.M."/>
            <person name="Odonohue M.F."/>
            <person name="Kim Y."/>
            <person name="Jakobsson M.E."/>
            <person name="Gessa L."/>
            <person name="Pinto R."/>
            <person name="Wu J."/>
            <person name="Davydova E."/>
            <person name="Moen A."/>
            <person name="Olsen J.V."/>
            <person name="Thiede B."/>
            <person name="Gleizes P.E."/>
            <person name="Leidel S.A."/>
            <person name="Falnes P.O."/>
        </authorList>
    </citation>
    <scope>METHYLATION AT HIS-245 BY METTL18</scope>
    <scope>MUTAGENESIS OF 246-ARG--ARG-249</scope>
</reference>
<reference key="29">
    <citation type="journal article" date="2022" name="Elife">
        <title>METTL18-mediated histidine methylation of RPL3 modulates translation elongation for proteostasis maintenance.</title>
        <authorList>
            <person name="Matsuura-Suzuki E."/>
            <person name="Shimazu T."/>
            <person name="Takahashi M."/>
            <person name="Kotoshiba K."/>
            <person name="Suzuki T."/>
            <person name="Kashiwagi K."/>
            <person name="Sohtome Y."/>
            <person name="Akakabe M."/>
            <person name="Sodeoka M."/>
            <person name="Dohmae N."/>
            <person name="Ito T."/>
            <person name="Shinkai Y."/>
            <person name="Iwasaki S."/>
        </authorList>
    </citation>
    <scope>FUNCTION</scope>
    <scope>METHYLATION AT HIS-245 BY METTL18</scope>
</reference>
<reference key="30">
    <citation type="journal article" date="2013" name="Nature">
        <title>Structures of the human and Drosophila 80S ribosome.</title>
        <authorList>
            <person name="Anger A.M."/>
            <person name="Armache J.P."/>
            <person name="Berninghausen O."/>
            <person name="Habeck M."/>
            <person name="Subklewe M."/>
            <person name="Wilson D.N."/>
            <person name="Beckmann R."/>
        </authorList>
    </citation>
    <scope>STRUCTURE BY ELECTRON MICROSCOPY (5.0 ANGSTROMS) OF 80S RIBOSOME</scope>
    <scope>FUNCTION</scope>
    <scope>SUBUNIT</scope>
    <scope>SUBCELLULAR LOCATION</scope>
</reference>
<reference evidence="15 16 17 18" key="31">
    <citation type="journal article" date="2020" name="Nat. Commun.">
        <title>Structural snapshots of human pre-60S ribosomal particles before and after nuclear export.</title>
        <authorList>
            <person name="Liang X."/>
            <person name="Zuo M.Q."/>
            <person name="Zhang Y."/>
            <person name="Li N."/>
            <person name="Ma C."/>
            <person name="Dong M.Q."/>
            <person name="Gao N."/>
        </authorList>
    </citation>
    <scope>STRUCTURE BY ELECTRON MICROSCOPY (3.09 ANGSTROMS)</scope>
    <scope>FUNCTION</scope>
    <scope>SUBUNIT</scope>
</reference>
<reference key="32">
    <citation type="journal article" date="2012" name="Hum. Mutat.">
        <title>Frameshift mutation in p53 regulator RPL26 is associated with multiple physical abnormalities and a specific pre-ribosomal RNA processing defect in diamond-blackfan anemia.</title>
        <authorList>
            <person name="Gazda H.T."/>
            <person name="Preti M."/>
            <person name="Sheen M.R."/>
            <person name="O'Donohue M.F."/>
            <person name="Vlachos A."/>
            <person name="Davies S.M."/>
            <person name="Kattamis A."/>
            <person name="Doherty L."/>
            <person name="Landowski M."/>
            <person name="Buros C."/>
            <person name="Ghazvinian R."/>
            <person name="Sieff C.A."/>
            <person name="Newburger P.E."/>
            <person name="Niewiadomska E."/>
            <person name="Matysiak M."/>
            <person name="Glader B."/>
            <person name="Atsidaftos E."/>
            <person name="Lipton J.M."/>
            <person name="Gleizes P.E."/>
            <person name="Beggs A.H."/>
        </authorList>
    </citation>
    <scope>VARIANT ARG-11</scope>
</reference>
<protein>
    <recommendedName>
        <fullName evidence="12">Large ribosomal subunit protein uL3</fullName>
    </recommendedName>
    <alternativeName>
        <fullName>60S ribosomal protein L3</fullName>
    </alternativeName>
    <alternativeName>
        <fullName>HIV-1 TAR RNA-binding protein B</fullName>
        <shortName>TARBP-B</shortName>
    </alternativeName>
</protein>
<comment type="function">
    <text evidence="7 9 14">Component of the large ribosomal subunit (PubMed:12962325, PubMed:23636399, PubMed:32669547, PubMed:35674491). The ribosome is a large ribonucleoprotein complex responsible for the synthesis of proteins in the cell (PubMed:12962325, PubMed:23636399, PubMed:32669547).</text>
</comment>
<comment type="subunit">
    <text evidence="6 7 8 9 10 11 14">Component of the large ribosomal subunit (PubMed:12962325, PubMed:23636399, PubMed:32669547). Interacts with DHX33 (PubMed:26100019).</text>
</comment>
<comment type="interaction">
    <interactant intactId="EBI-1056348">
        <id>P39023</id>
    </interactant>
    <interactant intactId="EBI-720609">
        <id>O76024</id>
        <label>WFS1</label>
    </interactant>
    <organismsDiffer>false</organismsDiffer>
    <experiments>3</experiments>
</comment>
<comment type="subcellular location">
    <subcellularLocation>
        <location evidence="4">Nucleus</location>
        <location evidence="4">Nucleolus</location>
    </subcellularLocation>
    <subcellularLocation>
        <location evidence="4 7">Cytoplasm</location>
    </subcellularLocation>
</comment>
<comment type="PTM">
    <text evidence="6 10 11">Constitutively monomethylated at His-245 by METTL18 (PubMed:23349634, PubMed:33693809, PubMed:35674491). Methylation at His-245 regulates translation elongation by slowing ribosome traversal on tyrosine codons: slower elongation provides enough time for proper folding of synthesized proteins and prevents cellular aggregation of tyrosine-rich proteins (PubMed:35674491). It is not required for incorporation of RPL3 into ribosomes (PubMed:33693809).</text>
</comment>
<comment type="similarity">
    <text evidence="13">Belongs to the universal ribosomal protein uL3 family.</text>
</comment>
<sequence>MSHRKFSAPRHGSLGFLPRKRSSRHRGKVKSFPKDDPSKPVHLTAFLGYKAGMTHIVREVDRPGSKVNKKEVVEAVTIVETPPMVVVGIVGYVETPRGLRTFKTVFAEHISDECKRRFYKNWHKSKKKAFTKYCKKWQDEDGKKQLEKDFSSMKKYCQVIRVIAHTQMRLLPLRQKKAHLMEIQVNGGTVAEKLDWARERLEQQVPVNQVFGQDEMIDVIGVTKGKGYKGVTSRWHTKKLPRKTHRGLRKVACIGAWHPARVAFSVARAGQKGYHHRTEINKKIYKIGQGYLIKDGKLIKNNASTDYDLSDKSINPLGGFVHYGEVTNDFVMLKGCVVGTKKRVLTLRKSLLVQTKRRALEKIDLKFIDTTSKFGHGRFQTMEEKKAFMGPLKKDRIAKEEGA</sequence>
<accession>P39023</accession>
<accession>B2RDV9</accession>
<accession>Q15548</accession>
<accession>Q5I0G0</accession>
<name>RL3_HUMAN</name>
<feature type="initiator methionine" description="Removed" evidence="3">
    <location>
        <position position="1"/>
    </location>
</feature>
<feature type="chain" id="PRO_0000077227" description="Large ribosomal subunit protein uL3">
    <location>
        <begin position="2"/>
        <end position="403"/>
    </location>
</feature>
<feature type="region of interest" description="Disordered" evidence="2">
    <location>
        <begin position="1"/>
        <end position="37"/>
    </location>
</feature>
<feature type="compositionally biased region" description="Basic residues" evidence="2">
    <location>
        <begin position="18"/>
        <end position="31"/>
    </location>
</feature>
<feature type="modified residue" description="Phosphoserine" evidence="19 21 23">
    <location>
        <position position="13"/>
    </location>
</feature>
<feature type="modified residue" description="N6-acetyllysine" evidence="1">
    <location>
        <position position="136"/>
    </location>
</feature>
<feature type="modified residue" description="Tele-methylhistidine" evidence="10 11">
    <location>
        <position position="245"/>
    </location>
</feature>
<feature type="modified residue" description="N6-acetyllysine; alternate" evidence="1">
    <location>
        <position position="286"/>
    </location>
</feature>
<feature type="modified residue" description="N6-acetyllysine; alternate" evidence="20">
    <location>
        <position position="294"/>
    </location>
</feature>
<feature type="modified residue" description="Phosphoserine" evidence="22">
    <location>
        <position position="304"/>
    </location>
</feature>
<feature type="modified residue" description="N6-acetyllysine; alternate" evidence="20">
    <location>
        <position position="366"/>
    </location>
</feature>
<feature type="modified residue" description="N6-acetyllysine" evidence="1">
    <location>
        <position position="373"/>
    </location>
</feature>
<feature type="cross-link" description="Glycyl lysine isopeptide (Lys-Gly) (interchain with G-Cter in SUMO2)" evidence="26">
    <location>
        <position position="39"/>
    </location>
</feature>
<feature type="cross-link" description="Glycyl lysine isopeptide (Lys-Gly) (interchain with G-Cter in SUMO2)" evidence="26">
    <location>
        <position position="224"/>
    </location>
</feature>
<feature type="cross-link" description="Glycyl lysine isopeptide (Lys-Gly) (interchain with G-Cter in SUMO2)" evidence="26">
    <location>
        <position position="226"/>
    </location>
</feature>
<feature type="cross-link" description="Glycyl lysine isopeptide (Lys-Gly) (interchain with G-Cter in SUMO2); alternate" evidence="26">
    <location>
        <position position="286"/>
    </location>
</feature>
<feature type="cross-link" description="Glycyl lysine isopeptide (Lys-Gly) (interchain with G-Cter in SUMO1); alternate" evidence="24">
    <location>
        <position position="294"/>
    </location>
</feature>
<feature type="cross-link" description="Glycyl lysine isopeptide (Lys-Gly) (interchain with G-Cter in SUMO2); alternate" evidence="26">
    <location>
        <position position="366"/>
    </location>
</feature>
<feature type="cross-link" description="Glycyl lysine isopeptide (Lys-Gly) (interchain with G-Cter in SUMO2)" evidence="26">
    <location>
        <position position="386"/>
    </location>
</feature>
<feature type="cross-link" description="Glycyl lysine isopeptide (Lys-Gly) (interchain with G-Cter in SUMO2)" evidence="26">
    <location>
        <position position="393"/>
    </location>
</feature>
<feature type="cross-link" description="Glycyl lysine isopeptide (Lys-Gly) (interchain with G-Cter in SUMO2)" evidence="25 26">
    <location>
        <position position="399"/>
    </location>
</feature>
<feature type="sequence variant" id="VAR_069220" description="Found in a Diamond-Blackfan anemia patient; uncertain significance; dbSNP:rs1569162425." evidence="5">
    <original>H</original>
    <variation>R</variation>
    <location>
        <position position="11"/>
    </location>
</feature>
<feature type="mutagenesis site" description="No effect on methylation by METTL18." evidence="10">
    <original>RGLR</original>
    <variation>AGLA</variation>
    <location>
        <begin position="246"/>
        <end position="249"/>
    </location>
</feature>
<feature type="sequence conflict" description="In Ref. 8; AAA91344." evidence="13" ref="8">
    <original>S</original>
    <variation>T</variation>
    <location>
        <position position="22"/>
    </location>
</feature>
<feature type="sequence conflict" description="In Ref. 8; AAA91344." evidence="13" ref="8">
    <original>A</original>
    <variation>V</variation>
    <location>
        <position position="260"/>
    </location>
</feature>